<gene>
    <name evidence="1" type="primary">selD</name>
    <name type="ordered locus">EUBREC_3159</name>
</gene>
<feature type="chain" id="PRO_1000212306" description="Selenide, water dikinase">
    <location>
        <begin position="1"/>
        <end position="342"/>
    </location>
</feature>
<feature type="active site" evidence="1">
    <location>
        <position position="13"/>
    </location>
</feature>
<feature type="binding site" description="in other chain" evidence="1">
    <location>
        <position position="16"/>
    </location>
    <ligand>
        <name>ATP</name>
        <dbReference type="ChEBI" id="CHEBI:30616"/>
        <note>ligand shared between dimeric partners</note>
    </ligand>
</feature>
<feature type="binding site" description="in other chain" evidence="1">
    <location>
        <begin position="44"/>
        <end position="46"/>
    </location>
    <ligand>
        <name>ATP</name>
        <dbReference type="ChEBI" id="CHEBI:30616"/>
        <note>ligand shared between dimeric partners</note>
    </ligand>
</feature>
<feature type="binding site" evidence="1">
    <location>
        <position position="47"/>
    </location>
    <ligand>
        <name>Mg(2+)</name>
        <dbReference type="ChEBI" id="CHEBI:18420"/>
    </ligand>
</feature>
<feature type="binding site" description="in other chain" evidence="1">
    <location>
        <position position="64"/>
    </location>
    <ligand>
        <name>ATP</name>
        <dbReference type="ChEBI" id="CHEBI:30616"/>
        <note>ligand shared between dimeric partners</note>
    </ligand>
</feature>
<feature type="binding site" description="in other chain" evidence="1">
    <location>
        <position position="87"/>
    </location>
    <ligand>
        <name>ATP</name>
        <dbReference type="ChEBI" id="CHEBI:30616"/>
        <note>ligand shared between dimeric partners</note>
    </ligand>
</feature>
<feature type="binding site" evidence="1">
    <location>
        <position position="87"/>
    </location>
    <ligand>
        <name>Mg(2+)</name>
        <dbReference type="ChEBI" id="CHEBI:18420"/>
    </ligand>
</feature>
<feature type="binding site" evidence="1">
    <location>
        <begin position="134"/>
        <end position="136"/>
    </location>
    <ligand>
        <name>ATP</name>
        <dbReference type="ChEBI" id="CHEBI:30616"/>
        <note>ligand shared between dimeric partners</note>
    </ligand>
</feature>
<feature type="binding site" evidence="1">
    <location>
        <position position="222"/>
    </location>
    <ligand>
        <name>Mg(2+)</name>
        <dbReference type="ChEBI" id="CHEBI:18420"/>
    </ligand>
</feature>
<feature type="site" description="Important for catalytic activity" evidence="1">
    <location>
        <position position="16"/>
    </location>
</feature>
<comment type="function">
    <text evidence="1">Synthesizes selenophosphate from selenide and ATP.</text>
</comment>
<comment type="catalytic activity">
    <reaction evidence="1">
        <text>hydrogenselenide + ATP + H2O = selenophosphate + AMP + phosphate + 2 H(+)</text>
        <dbReference type="Rhea" id="RHEA:18737"/>
        <dbReference type="ChEBI" id="CHEBI:15377"/>
        <dbReference type="ChEBI" id="CHEBI:15378"/>
        <dbReference type="ChEBI" id="CHEBI:16144"/>
        <dbReference type="ChEBI" id="CHEBI:29317"/>
        <dbReference type="ChEBI" id="CHEBI:30616"/>
        <dbReference type="ChEBI" id="CHEBI:43474"/>
        <dbReference type="ChEBI" id="CHEBI:456215"/>
        <dbReference type="EC" id="2.7.9.3"/>
    </reaction>
</comment>
<comment type="cofactor">
    <cofactor evidence="1">
        <name>Mg(2+)</name>
        <dbReference type="ChEBI" id="CHEBI:18420"/>
    </cofactor>
    <text evidence="1">Binds 1 Mg(2+) ion per monomer.</text>
</comment>
<comment type="subunit">
    <text evidence="1">Homodimer.</text>
</comment>
<comment type="similarity">
    <text evidence="1">Belongs to the selenophosphate synthase 1 family. Class I subfamily.</text>
</comment>
<proteinExistence type="inferred from homology"/>
<evidence type="ECO:0000255" key="1">
    <source>
        <dbReference type="HAMAP-Rule" id="MF_00625"/>
    </source>
</evidence>
<dbReference type="EC" id="2.7.9.3" evidence="1"/>
<dbReference type="EMBL" id="CP001107">
    <property type="protein sequence ID" value="ACR76886.1"/>
    <property type="molecule type" value="Genomic_DNA"/>
</dbReference>
<dbReference type="RefSeq" id="WP_012743913.1">
    <property type="nucleotide sequence ID" value="NC_012781.1"/>
</dbReference>
<dbReference type="SMR" id="C4ZDB0"/>
<dbReference type="STRING" id="515619.EUBREC_3159"/>
<dbReference type="PaxDb" id="515619-EUBREC_3159"/>
<dbReference type="GeneID" id="86989833"/>
<dbReference type="KEGG" id="ere:EUBREC_3159"/>
<dbReference type="HOGENOM" id="CLU_032859_0_1_9"/>
<dbReference type="Proteomes" id="UP000001477">
    <property type="component" value="Chromosome"/>
</dbReference>
<dbReference type="GO" id="GO:0005737">
    <property type="term" value="C:cytoplasm"/>
    <property type="evidence" value="ECO:0007669"/>
    <property type="project" value="TreeGrafter"/>
</dbReference>
<dbReference type="GO" id="GO:0005524">
    <property type="term" value="F:ATP binding"/>
    <property type="evidence" value="ECO:0007669"/>
    <property type="project" value="UniProtKB-UniRule"/>
</dbReference>
<dbReference type="GO" id="GO:0000287">
    <property type="term" value="F:magnesium ion binding"/>
    <property type="evidence" value="ECO:0007669"/>
    <property type="project" value="UniProtKB-UniRule"/>
</dbReference>
<dbReference type="GO" id="GO:0004756">
    <property type="term" value="F:selenide, water dikinase activity"/>
    <property type="evidence" value="ECO:0007669"/>
    <property type="project" value="UniProtKB-UniRule"/>
</dbReference>
<dbReference type="GO" id="GO:0016260">
    <property type="term" value="P:selenocysteine biosynthetic process"/>
    <property type="evidence" value="ECO:0007669"/>
    <property type="project" value="InterPro"/>
</dbReference>
<dbReference type="CDD" id="cd02195">
    <property type="entry name" value="SelD"/>
    <property type="match status" value="1"/>
</dbReference>
<dbReference type="FunFam" id="3.30.1330.10:FF:000003">
    <property type="entry name" value="Selenide, water dikinase"/>
    <property type="match status" value="1"/>
</dbReference>
<dbReference type="Gene3D" id="3.90.650.10">
    <property type="entry name" value="PurM-like C-terminal domain"/>
    <property type="match status" value="1"/>
</dbReference>
<dbReference type="Gene3D" id="3.30.1330.10">
    <property type="entry name" value="PurM-like, N-terminal domain"/>
    <property type="match status" value="1"/>
</dbReference>
<dbReference type="HAMAP" id="MF_00625">
    <property type="entry name" value="SelD"/>
    <property type="match status" value="1"/>
</dbReference>
<dbReference type="InterPro" id="IPR010918">
    <property type="entry name" value="PurM-like_C_dom"/>
</dbReference>
<dbReference type="InterPro" id="IPR036676">
    <property type="entry name" value="PurM-like_C_sf"/>
</dbReference>
<dbReference type="InterPro" id="IPR016188">
    <property type="entry name" value="PurM-like_N"/>
</dbReference>
<dbReference type="InterPro" id="IPR036921">
    <property type="entry name" value="PurM-like_N_sf"/>
</dbReference>
<dbReference type="InterPro" id="IPR023061">
    <property type="entry name" value="SelD_I"/>
</dbReference>
<dbReference type="InterPro" id="IPR004536">
    <property type="entry name" value="SPS/SelD"/>
</dbReference>
<dbReference type="NCBIfam" id="NF002098">
    <property type="entry name" value="PRK00943.1"/>
    <property type="match status" value="1"/>
</dbReference>
<dbReference type="NCBIfam" id="TIGR00476">
    <property type="entry name" value="selD"/>
    <property type="match status" value="1"/>
</dbReference>
<dbReference type="PANTHER" id="PTHR10256:SF0">
    <property type="entry name" value="INACTIVE SELENIDE, WATER DIKINASE-LIKE PROTEIN-RELATED"/>
    <property type="match status" value="1"/>
</dbReference>
<dbReference type="PANTHER" id="PTHR10256">
    <property type="entry name" value="SELENIDE, WATER DIKINASE"/>
    <property type="match status" value="1"/>
</dbReference>
<dbReference type="Pfam" id="PF00586">
    <property type="entry name" value="AIRS"/>
    <property type="match status" value="1"/>
</dbReference>
<dbReference type="Pfam" id="PF02769">
    <property type="entry name" value="AIRS_C"/>
    <property type="match status" value="1"/>
</dbReference>
<dbReference type="PIRSF" id="PIRSF036407">
    <property type="entry name" value="Selenphspht_syn"/>
    <property type="match status" value="1"/>
</dbReference>
<dbReference type="SUPFAM" id="SSF56042">
    <property type="entry name" value="PurM C-terminal domain-like"/>
    <property type="match status" value="1"/>
</dbReference>
<dbReference type="SUPFAM" id="SSF55326">
    <property type="entry name" value="PurM N-terminal domain-like"/>
    <property type="match status" value="1"/>
</dbReference>
<name>SELD_AGARV</name>
<organism>
    <name type="scientific">Agathobacter rectalis (strain ATCC 33656 / DSM 3377 / JCM 17463 / KCTC 5835 / VPI 0990)</name>
    <name type="common">Eubacterium rectale</name>
    <dbReference type="NCBI Taxonomy" id="515619"/>
    <lineage>
        <taxon>Bacteria</taxon>
        <taxon>Bacillati</taxon>
        <taxon>Bacillota</taxon>
        <taxon>Clostridia</taxon>
        <taxon>Lachnospirales</taxon>
        <taxon>Lachnospiraceae</taxon>
        <taxon>Agathobacter</taxon>
    </lineage>
</organism>
<reference key="1">
    <citation type="journal article" date="2009" name="Proc. Natl. Acad. Sci. U.S.A.">
        <title>Characterizing a model human gut microbiota composed of members of its two dominant bacterial phyla.</title>
        <authorList>
            <person name="Mahowald M.A."/>
            <person name="Rey F.E."/>
            <person name="Seedorf H."/>
            <person name="Turnbaugh P.J."/>
            <person name="Fulton R.S."/>
            <person name="Wollam A."/>
            <person name="Shah N."/>
            <person name="Wang C."/>
            <person name="Magrini V."/>
            <person name="Wilson R.K."/>
            <person name="Cantarel B.L."/>
            <person name="Coutinho P.M."/>
            <person name="Henrissat B."/>
            <person name="Crock L.W."/>
            <person name="Russell A."/>
            <person name="Verberkmoes N.C."/>
            <person name="Hettich R.L."/>
            <person name="Gordon J.I."/>
        </authorList>
    </citation>
    <scope>NUCLEOTIDE SEQUENCE [LARGE SCALE GENOMIC DNA]</scope>
    <source>
        <strain>ATCC 33656 / DSM 3377 / JCM 17463 / KCTC 5835 / LMG 30912 / VPI 0990</strain>
    </source>
</reference>
<sequence length="342" mass="36211">MPQEIVFCKGGGCTAKLGPDLLSHVLAKLPRGEKDSNLLIGYDSCDDAAVYKISDDTAVVQTLDFFPPMVDDPYTFGQIAAANALSDIYAMGGTVKTALNIVCFPEKMDLNILGKIMQGGADKVIEAGGTLAGGHSIADSDVKYGLSVMGTVHPEHIYSNNTGQPSDVLILTKKLGVGLVCNANRVGEAPLGAIEDAVSSMTTLNKAASEISHAFDIHACTDVTGFSFLGHLSEMLNDDITALIDSISIPVITGALRCADEFFLTAAAQRNRNHVGDKVCFAKNIPFSMEEVLFDPQTSGGLLFAVKASEADAFLHELKAAGLPAAKVGRFVKRRDVPIYVN</sequence>
<protein>
    <recommendedName>
        <fullName evidence="1">Selenide, water dikinase</fullName>
        <ecNumber evidence="1">2.7.9.3</ecNumber>
    </recommendedName>
    <alternativeName>
        <fullName evidence="1">Selenium donor protein</fullName>
    </alternativeName>
    <alternativeName>
        <fullName evidence="1">Selenophosphate synthase</fullName>
    </alternativeName>
</protein>
<accession>C4ZDB0</accession>
<keyword id="KW-0067">ATP-binding</keyword>
<keyword id="KW-0418">Kinase</keyword>
<keyword id="KW-0460">Magnesium</keyword>
<keyword id="KW-0479">Metal-binding</keyword>
<keyword id="KW-0547">Nucleotide-binding</keyword>
<keyword id="KW-0711">Selenium</keyword>
<keyword id="KW-0808">Transferase</keyword>